<gene>
    <name type="ordered locus">TTHA1431</name>
</gene>
<proteinExistence type="evidence at protein level"/>
<protein>
    <recommendedName>
        <fullName>Dodecin</fullName>
    </recommendedName>
</protein>
<organism>
    <name type="scientific">Thermus thermophilus (strain ATCC 27634 / DSM 579 / HB8)</name>
    <dbReference type="NCBI Taxonomy" id="300852"/>
    <lineage>
        <taxon>Bacteria</taxon>
        <taxon>Thermotogati</taxon>
        <taxon>Deinococcota</taxon>
        <taxon>Deinococci</taxon>
        <taxon>Thermales</taxon>
        <taxon>Thermaceae</taxon>
        <taxon>Thermus</taxon>
    </lineage>
</organism>
<accession>Q5SIE3</accession>
<name>DODEC_THET8</name>
<evidence type="ECO:0000269" key="1">
    <source>
    </source>
</evidence>
<evidence type="ECO:0000269" key="2">
    <source ref="2"/>
</evidence>
<evidence type="ECO:0000269" key="3">
    <source ref="4"/>
</evidence>
<evidence type="ECO:0000305" key="4"/>
<evidence type="ECO:0007829" key="5">
    <source>
        <dbReference type="PDB" id="2UX9"/>
    </source>
</evidence>
<keyword id="KW-0002">3D-structure</keyword>
<keyword id="KW-0274">FAD</keyword>
<keyword id="KW-0285">Flavoprotein</keyword>
<keyword id="KW-0288">FMN</keyword>
<keyword id="KW-0547">Nucleotide-binding</keyword>
<keyword id="KW-1185">Reference proteome</keyword>
<feature type="chain" id="PRO_0000429122" description="Dodecin">
    <location>
        <begin position="1"/>
        <end position="69"/>
    </location>
</feature>
<feature type="binding site" description="in other chain" evidence="3">
    <location>
        <begin position="3"/>
        <end position="5"/>
    </location>
    <ligand>
        <name>FMN</name>
        <dbReference type="ChEBI" id="CHEBI:58210"/>
        <note>ligand shared between two neighboring subunits</note>
    </ligand>
</feature>
<feature type="binding site" evidence="3">
    <location>
        <position position="6"/>
    </location>
    <ligand>
        <name>CoA</name>
        <dbReference type="ChEBI" id="CHEBI:57287"/>
        <note>ligand shared between two neighboring subunits</note>
    </ligand>
</feature>
<feature type="binding site" description="in other chain" evidence="3">
    <location>
        <position position="28"/>
    </location>
    <ligand>
        <name>CoA</name>
        <dbReference type="ChEBI" id="CHEBI:57287"/>
        <note>ligand shared between two neighboring subunits</note>
    </ligand>
</feature>
<feature type="binding site" description="in other chain">
    <location>
        <begin position="32"/>
        <end position="34"/>
    </location>
    <ligand>
        <name>CoA</name>
        <dbReference type="ChEBI" id="CHEBI:57287"/>
        <note>ligand shared between two neighboring subunits</note>
    </ligand>
</feature>
<feature type="binding site" description="in other chain" evidence="3">
    <location>
        <position position="37"/>
    </location>
    <ligand>
        <name>FMN</name>
        <dbReference type="ChEBI" id="CHEBI:58210"/>
        <note>ligand shared between two neighboring subunits</note>
    </ligand>
</feature>
<feature type="binding site" description="in other chain" evidence="3">
    <location>
        <position position="38"/>
    </location>
    <ligand>
        <name>FMN</name>
        <dbReference type="ChEBI" id="CHEBI:58210"/>
        <note>ligand shared between two neighboring subunits</note>
    </ligand>
</feature>
<feature type="binding site" evidence="3">
    <location>
        <position position="45"/>
    </location>
    <ligand>
        <name>FMN</name>
        <dbReference type="ChEBI" id="CHEBI:58210"/>
        <note>ligand shared between two neighboring subunits</note>
    </ligand>
</feature>
<feature type="binding site" evidence="3">
    <location>
        <position position="57"/>
    </location>
    <ligand>
        <name>FMN</name>
        <dbReference type="ChEBI" id="CHEBI:58210"/>
        <note>ligand shared between two neighboring subunits</note>
    </ligand>
</feature>
<feature type="binding site" description="in other chain">
    <location>
        <begin position="65"/>
        <end position="67"/>
    </location>
    <ligand>
        <name>CoA</name>
        <dbReference type="ChEBI" id="CHEBI:57287"/>
        <note>ligand shared between two neighboring subunits</note>
    </ligand>
</feature>
<feature type="binding site" description="in other chain" evidence="3">
    <location>
        <position position="65"/>
    </location>
    <ligand>
        <name>FMN</name>
        <dbReference type="ChEBI" id="CHEBI:58210"/>
        <note>ligand shared between two neighboring subunits</note>
    </ligand>
</feature>
<feature type="site" description="May be important for ligand binding specificity and FMN binding">
    <location>
        <position position="65"/>
    </location>
</feature>
<feature type="mutagenesis site" description="No effect on the orientation of the bound flavin." evidence="1">
    <original>R</original>
    <variation>A</variation>
    <location>
        <position position="45"/>
    </location>
</feature>
<feature type="mutagenesis site" description="No effect on the orientation of the bound flavin." evidence="1">
    <original>R</original>
    <variation>A</variation>
    <location>
        <position position="65"/>
    </location>
</feature>
<feature type="strand" evidence="5">
    <location>
        <begin position="5"/>
        <end position="16"/>
    </location>
</feature>
<feature type="helix" evidence="5">
    <location>
        <begin position="18"/>
        <end position="32"/>
    </location>
</feature>
<feature type="strand" evidence="5">
    <location>
        <begin position="36"/>
        <end position="49"/>
    </location>
</feature>
<feature type="strand" evidence="5">
    <location>
        <begin position="52"/>
        <end position="65"/>
    </location>
</feature>
<reference key="1">
    <citation type="submission" date="2004-11" db="EMBL/GenBank/DDBJ databases">
        <title>Complete genome sequence of Thermus thermophilus HB8.</title>
        <authorList>
            <person name="Masui R."/>
            <person name="Kurokawa K."/>
            <person name="Nakagawa N."/>
            <person name="Tokunaga F."/>
            <person name="Koyama Y."/>
            <person name="Shibata T."/>
            <person name="Oshima T."/>
            <person name="Yokoyama S."/>
            <person name="Yasunaga T."/>
            <person name="Kuramitsu S."/>
        </authorList>
    </citation>
    <scope>NUCLEOTIDE SEQUENCE [LARGE SCALE GENOMIC DNA]</scope>
    <source>
        <strain>ATCC 27634 / DSM 579 / HB8</strain>
    </source>
</reference>
<reference key="2">
    <citation type="submission" date="2006-02" db="PDB data bank">
        <title>Crystal structure of TT0972 protein from Thermus thermophilus.</title>
        <authorList>
            <person name="Kumei M."/>
            <person name="Inagaki E."/>
            <person name="Nakano N."/>
            <person name="Shinkai A."/>
            <person name="Yokoyama S."/>
        </authorList>
    </citation>
    <scope>X-RAY CRYSTALLOGRAPHY (1.50 ANGSTROMS) IN COMPLEX WITH FAD</scope>
</reference>
<reference key="3">
    <citation type="journal article" date="2007" name="J. Biol. Chem.">
        <title>The dodecin from Thermus thermophilus, a bifunctional cofactor storage protein.</title>
        <authorList>
            <person name="Meissner B."/>
            <person name="Schleicher E."/>
            <person name="Weber S."/>
            <person name="Essen L.O."/>
        </authorList>
    </citation>
    <scope>X-RAY CRYSTALLOGRAPHY (1.40 ANGSTROMS) OF WILD-TYPE AND MUTANTS ALA-45 AND ALA-65 IN COMPLEXES WITH COENZYME A AND FMN</scope>
    <scope>FUNCTION</scope>
    <scope>SUBUNIT</scope>
    <scope>MUTAGENESIS OF ARG-45 AND ARG-65</scope>
    <source>
        <strain>ATCC 27634 / DSM 579 / HB8</strain>
    </source>
</reference>
<reference key="4">
    <citation type="submission" date="2008-07" db="PDB data bank">
        <title>Ultrafast charge transfer dynamics in flavoprotein dodecin.</title>
        <authorList>
            <person name="Gurzadyan G.G."/>
            <person name="Meissner B."/>
            <person name="Sander B."/>
            <person name="Essen L.-O."/>
            <person name="Michel-Beyerle M.E."/>
        </authorList>
    </citation>
    <scope>X-RAY CRYSTALLOGRAPHY (1.50 ANGSTROMS) IN COMPLEX WITH COENZYME A AND FMN</scope>
</reference>
<dbReference type="EMBL" id="AP008226">
    <property type="protein sequence ID" value="BAD71254.1"/>
    <property type="molecule type" value="Genomic_DNA"/>
</dbReference>
<dbReference type="RefSeq" id="WP_011173482.1">
    <property type="nucleotide sequence ID" value="NC_006461.1"/>
</dbReference>
<dbReference type="RefSeq" id="YP_144697.1">
    <property type="nucleotide sequence ID" value="NC_006461.1"/>
</dbReference>
<dbReference type="PDB" id="2CZ8">
    <property type="method" value="X-ray"/>
    <property type="resolution" value="1.50 A"/>
    <property type="chains" value="A/B/C/D/E/F/G/H=1-69"/>
</dbReference>
<dbReference type="PDB" id="2DEG">
    <property type="method" value="X-ray"/>
    <property type="resolution" value="1.70 A"/>
    <property type="chains" value="A/B/C/D/E/F=1-69"/>
</dbReference>
<dbReference type="PDB" id="2UX9">
    <property type="method" value="X-ray"/>
    <property type="resolution" value="1.40 A"/>
    <property type="chains" value="A/B/C/D/E/F=1-69"/>
</dbReference>
<dbReference type="PDB" id="2V18">
    <property type="method" value="X-ray"/>
    <property type="resolution" value="2.59 A"/>
    <property type="chains" value="A/B/C/D/E/F/G/H/I/J/K/L=2-69"/>
</dbReference>
<dbReference type="PDB" id="2V19">
    <property type="method" value="X-ray"/>
    <property type="resolution" value="2.59 A"/>
    <property type="chains" value="A/B/C/D/E/F/G/H/I/J/K/L=2-69"/>
</dbReference>
<dbReference type="PDB" id="2V21">
    <property type="method" value="X-ray"/>
    <property type="resolution" value="2.40 A"/>
    <property type="chains" value="A/B/C/D/E/F=1-69"/>
</dbReference>
<dbReference type="PDB" id="2VYX">
    <property type="method" value="X-ray"/>
    <property type="resolution" value="1.50 A"/>
    <property type="chains" value="A/B/C/D/E/F/G/H/I/J/K/L=1-69"/>
</dbReference>
<dbReference type="PDBsum" id="2CZ8"/>
<dbReference type="PDBsum" id="2DEG"/>
<dbReference type="PDBsum" id="2UX9"/>
<dbReference type="PDBsum" id="2V18"/>
<dbReference type="PDBsum" id="2V19"/>
<dbReference type="PDBsum" id="2V21"/>
<dbReference type="PDBsum" id="2VYX"/>
<dbReference type="SMR" id="Q5SIE3"/>
<dbReference type="EnsemblBacteria" id="BAD71254">
    <property type="protein sequence ID" value="BAD71254"/>
    <property type="gene ID" value="BAD71254"/>
</dbReference>
<dbReference type="GeneID" id="3168700"/>
<dbReference type="KEGG" id="ttj:TTHA1431"/>
<dbReference type="PATRIC" id="fig|300852.9.peg.1405"/>
<dbReference type="eggNOG" id="COG3360">
    <property type="taxonomic scope" value="Bacteria"/>
</dbReference>
<dbReference type="HOGENOM" id="CLU_161196_1_1_0"/>
<dbReference type="PhylomeDB" id="Q5SIE3"/>
<dbReference type="EvolutionaryTrace" id="Q5SIE3"/>
<dbReference type="Proteomes" id="UP000000532">
    <property type="component" value="Chromosome"/>
</dbReference>
<dbReference type="GO" id="GO:0000166">
    <property type="term" value="F:nucleotide binding"/>
    <property type="evidence" value="ECO:0007669"/>
    <property type="project" value="UniProtKB-KW"/>
</dbReference>
<dbReference type="Gene3D" id="3.30.1660.10">
    <property type="entry name" value="Flavin-binding protein dodecin"/>
    <property type="match status" value="1"/>
</dbReference>
<dbReference type="InterPro" id="IPR009923">
    <property type="entry name" value="Dodecin"/>
</dbReference>
<dbReference type="InterPro" id="IPR025543">
    <property type="entry name" value="Dodecin-like"/>
</dbReference>
<dbReference type="InterPro" id="IPR036694">
    <property type="entry name" value="Dodecin-like_sf"/>
</dbReference>
<dbReference type="InterPro" id="IPR050049">
    <property type="entry name" value="Dodecin_bact"/>
</dbReference>
<dbReference type="NCBIfam" id="NF043052">
    <property type="entry name" value="DodecBact"/>
    <property type="match status" value="1"/>
</dbReference>
<dbReference type="PANTHER" id="PTHR39324">
    <property type="entry name" value="CALCIUM DODECIN"/>
    <property type="match status" value="1"/>
</dbReference>
<dbReference type="PANTHER" id="PTHR39324:SF1">
    <property type="entry name" value="CALCIUM DODECIN"/>
    <property type="match status" value="1"/>
</dbReference>
<dbReference type="Pfam" id="PF07311">
    <property type="entry name" value="Dodecin"/>
    <property type="match status" value="1"/>
</dbReference>
<dbReference type="SUPFAM" id="SSF89807">
    <property type="entry name" value="Dodecin-like"/>
    <property type="match status" value="1"/>
</dbReference>
<comment type="function">
    <text evidence="1">May function as storage protein that sequesters various flavins and other cofactors, thereby protecting the cell against undesirable reactions mediated by the free cofactors. Binds and sequesters FMN, FAD, lumiflavin and lumichrome, and can also bind coenzyme A.</text>
</comment>
<comment type="subunit">
    <text evidence="1 2 3">Homododecamer; four homotrimers assemble to form a dodecameric hollow sphere with an outer diameter of about 60 Angstroms. Flavin dimers are bound between subunits with a stoichiometry of 6 flavin dimers per dodecamer. Besides, trimeric coenzyme A molecules can be bound between subunits. A dodecamer can bind simultaneously 12 flavin and 12 coenzyme A molecules.</text>
</comment>
<comment type="similarity">
    <text evidence="4">Belongs to the dodecin family.</text>
</comment>
<comment type="caution">
    <text evidence="4">Dodecin family members from different organisms have non-identical ligand binding specificity.</text>
</comment>
<sequence length="69" mass="7748">MGKVYKKVELVGTSEEGLEAAIQAALARARKTLRHLDWFEVKEIRGTIGEAGVKEYQVVLEVGFRLEET</sequence>